<protein>
    <recommendedName>
        <fullName evidence="1">Small ribosomal subunit protein uS7</fullName>
    </recommendedName>
    <alternativeName>
        <fullName evidence="2">30S ribosomal protein S7</fullName>
    </alternativeName>
</protein>
<gene>
    <name evidence="1" type="primary">rpsG</name>
    <name evidence="1" type="synonym">rps7</name>
    <name type="ordered locus">SYNPCC7002_A2063</name>
</gene>
<comment type="function">
    <text evidence="1">One of the primary rRNA binding proteins, it binds directly to 16S rRNA where it nucleates assembly of the head domain of the 30S subunit. Is located at the subunit interface close to the decoding center, probably blocks exit of the E-site tRNA.</text>
</comment>
<comment type="subunit">
    <text evidence="1">Part of the 30S ribosomal subunit. Contacts proteins S9 and S11.</text>
</comment>
<comment type="similarity">
    <text evidence="1">Belongs to the universal ribosomal protein uS7 family.</text>
</comment>
<organism>
    <name type="scientific">Picosynechococcus sp. (strain ATCC 27264 / PCC 7002 / PR-6)</name>
    <name type="common">Agmenellum quadruplicatum</name>
    <dbReference type="NCBI Taxonomy" id="32049"/>
    <lineage>
        <taxon>Bacteria</taxon>
        <taxon>Bacillati</taxon>
        <taxon>Cyanobacteriota</taxon>
        <taxon>Cyanophyceae</taxon>
        <taxon>Oscillatoriophycideae</taxon>
        <taxon>Chroococcales</taxon>
        <taxon>Geminocystaceae</taxon>
        <taxon>Picosynechococcus</taxon>
    </lineage>
</organism>
<dbReference type="EMBL" id="CP000951">
    <property type="protein sequence ID" value="ACB00050.1"/>
    <property type="molecule type" value="Genomic_DNA"/>
</dbReference>
<dbReference type="RefSeq" id="WP_012307671.1">
    <property type="nucleotide sequence ID" value="NZ_JAHHPU010000002.1"/>
</dbReference>
<dbReference type="SMR" id="B1XI65"/>
<dbReference type="STRING" id="32049.SYNPCC7002_A2063"/>
<dbReference type="KEGG" id="syp:SYNPCC7002_A2063"/>
<dbReference type="eggNOG" id="COG0049">
    <property type="taxonomic scope" value="Bacteria"/>
</dbReference>
<dbReference type="HOGENOM" id="CLU_072226_1_1_3"/>
<dbReference type="Proteomes" id="UP000001688">
    <property type="component" value="Chromosome"/>
</dbReference>
<dbReference type="GO" id="GO:0015935">
    <property type="term" value="C:small ribosomal subunit"/>
    <property type="evidence" value="ECO:0007669"/>
    <property type="project" value="InterPro"/>
</dbReference>
<dbReference type="GO" id="GO:0019843">
    <property type="term" value="F:rRNA binding"/>
    <property type="evidence" value="ECO:0007669"/>
    <property type="project" value="UniProtKB-UniRule"/>
</dbReference>
<dbReference type="GO" id="GO:0003735">
    <property type="term" value="F:structural constituent of ribosome"/>
    <property type="evidence" value="ECO:0007669"/>
    <property type="project" value="InterPro"/>
</dbReference>
<dbReference type="GO" id="GO:0000049">
    <property type="term" value="F:tRNA binding"/>
    <property type="evidence" value="ECO:0007669"/>
    <property type="project" value="UniProtKB-UniRule"/>
</dbReference>
<dbReference type="GO" id="GO:0006412">
    <property type="term" value="P:translation"/>
    <property type="evidence" value="ECO:0007669"/>
    <property type="project" value="UniProtKB-UniRule"/>
</dbReference>
<dbReference type="CDD" id="cd14871">
    <property type="entry name" value="uS7_Chloroplast"/>
    <property type="match status" value="1"/>
</dbReference>
<dbReference type="FunFam" id="1.10.455.10:FF:000001">
    <property type="entry name" value="30S ribosomal protein S7"/>
    <property type="match status" value="1"/>
</dbReference>
<dbReference type="Gene3D" id="1.10.455.10">
    <property type="entry name" value="Ribosomal protein S7 domain"/>
    <property type="match status" value="1"/>
</dbReference>
<dbReference type="HAMAP" id="MF_00480_B">
    <property type="entry name" value="Ribosomal_uS7_B"/>
    <property type="match status" value="1"/>
</dbReference>
<dbReference type="InterPro" id="IPR000235">
    <property type="entry name" value="Ribosomal_uS7"/>
</dbReference>
<dbReference type="InterPro" id="IPR005717">
    <property type="entry name" value="Ribosomal_uS7_bac/org-type"/>
</dbReference>
<dbReference type="InterPro" id="IPR020606">
    <property type="entry name" value="Ribosomal_uS7_CS"/>
</dbReference>
<dbReference type="InterPro" id="IPR023798">
    <property type="entry name" value="Ribosomal_uS7_dom"/>
</dbReference>
<dbReference type="InterPro" id="IPR036823">
    <property type="entry name" value="Ribosomal_uS7_dom_sf"/>
</dbReference>
<dbReference type="NCBIfam" id="TIGR01029">
    <property type="entry name" value="rpsG_bact"/>
    <property type="match status" value="1"/>
</dbReference>
<dbReference type="PANTHER" id="PTHR11205">
    <property type="entry name" value="RIBOSOMAL PROTEIN S7"/>
    <property type="match status" value="1"/>
</dbReference>
<dbReference type="Pfam" id="PF00177">
    <property type="entry name" value="Ribosomal_S7"/>
    <property type="match status" value="1"/>
</dbReference>
<dbReference type="PIRSF" id="PIRSF002122">
    <property type="entry name" value="RPS7p_RPS7a_RPS5e_RPS7o"/>
    <property type="match status" value="1"/>
</dbReference>
<dbReference type="SUPFAM" id="SSF47973">
    <property type="entry name" value="Ribosomal protein S7"/>
    <property type="match status" value="1"/>
</dbReference>
<dbReference type="PROSITE" id="PS00052">
    <property type="entry name" value="RIBOSOMAL_S7"/>
    <property type="match status" value="1"/>
</dbReference>
<reference key="1">
    <citation type="submission" date="2008-02" db="EMBL/GenBank/DDBJ databases">
        <title>Complete sequence of Synechococcus sp. PCC 7002.</title>
        <authorList>
            <person name="Li T."/>
            <person name="Zhao J."/>
            <person name="Zhao C."/>
            <person name="Liu Z."/>
            <person name="Zhao F."/>
            <person name="Marquardt J."/>
            <person name="Nomura C.T."/>
            <person name="Persson S."/>
            <person name="Detter J.C."/>
            <person name="Richardson P.M."/>
            <person name="Lanz C."/>
            <person name="Schuster S.C."/>
            <person name="Wang J."/>
            <person name="Li S."/>
            <person name="Huang X."/>
            <person name="Cai T."/>
            <person name="Yu Z."/>
            <person name="Luo J."/>
            <person name="Zhao J."/>
            <person name="Bryant D.A."/>
        </authorList>
    </citation>
    <scope>NUCLEOTIDE SEQUENCE [LARGE SCALE GENOMIC DNA]</scope>
    <source>
        <strain>ATCC 27264 / PCC 7002 / PR-6</strain>
    </source>
</reference>
<name>RS7_PICP2</name>
<feature type="chain" id="PRO_1000126013" description="Small ribosomal subunit protein uS7">
    <location>
        <begin position="1"/>
        <end position="156"/>
    </location>
</feature>
<evidence type="ECO:0000255" key="1">
    <source>
        <dbReference type="HAMAP-Rule" id="MF_00480"/>
    </source>
</evidence>
<evidence type="ECO:0000305" key="2"/>
<keyword id="KW-1185">Reference proteome</keyword>
<keyword id="KW-0687">Ribonucleoprotein</keyword>
<keyword id="KW-0689">Ribosomal protein</keyword>
<keyword id="KW-0694">RNA-binding</keyword>
<keyword id="KW-0699">rRNA-binding</keyword>
<keyword id="KW-0820">tRNA-binding</keyword>
<sequence length="156" mass="17563">MSRRSVTKKRVVPPDAVYNNRLLSMTIRRVMKSGKKSLAARIVYDALDIIKERTGSDPIEVFETAIRNLTPLVEVKARRVGGATYQVPMEVRQGRGTALALRWLIGYARQRSGKSMAIKLANELMDAANETGGAIKKREDTHRMAEANKAFAHYRY</sequence>
<proteinExistence type="inferred from homology"/>
<accession>B1XI65</accession>